<gene>
    <name evidence="1" type="primary">rplB</name>
    <name type="ordered locus">stu1931</name>
</gene>
<sequence>MGIKVYKPTTNGRRNMTSLDFAEITTSTPEKSLLVSLKNKAGRNNNGRITVRHQGGGHKRHYRLIDFKRNKDGVEAVVKTIEYDPNRTANIALVHYTDGVKAYIIAPKGLEVGQRIVSGPDADIKVGNALPLANIPVGTVIHNIELKPGKGAELVRAAGASAQVLGQEGKYVLVRLQSGEVRMILGTCRATIGTVGNEQQSLINLGKAGRNRWKGVRPTVRGSVMNPNDHPHGGGEGKAPVGRKAPSTPWGKPALGLKTRNKKAKSDKLIVRRRNEK</sequence>
<feature type="chain" id="PRO_0000237249" description="Large ribosomal subunit protein uL2">
    <location>
        <begin position="1"/>
        <end position="277"/>
    </location>
</feature>
<feature type="region of interest" description="Disordered" evidence="2">
    <location>
        <begin position="222"/>
        <end position="277"/>
    </location>
</feature>
<feature type="compositionally biased region" description="Basic and acidic residues" evidence="2">
    <location>
        <begin position="264"/>
        <end position="277"/>
    </location>
</feature>
<name>RL2_STRT2</name>
<evidence type="ECO:0000255" key="1">
    <source>
        <dbReference type="HAMAP-Rule" id="MF_01320"/>
    </source>
</evidence>
<evidence type="ECO:0000256" key="2">
    <source>
        <dbReference type="SAM" id="MobiDB-lite"/>
    </source>
</evidence>
<evidence type="ECO:0000305" key="3"/>
<reference key="1">
    <citation type="journal article" date="2004" name="Nat. Biotechnol.">
        <title>Complete sequence and comparative genome analysis of the dairy bacterium Streptococcus thermophilus.</title>
        <authorList>
            <person name="Bolotin A."/>
            <person name="Quinquis B."/>
            <person name="Renault P."/>
            <person name="Sorokin A."/>
            <person name="Ehrlich S.D."/>
            <person name="Kulakauskas S."/>
            <person name="Lapidus A."/>
            <person name="Goltsman E."/>
            <person name="Mazur M."/>
            <person name="Pusch G.D."/>
            <person name="Fonstein M."/>
            <person name="Overbeek R."/>
            <person name="Kyprides N."/>
            <person name="Purnelle B."/>
            <person name="Prozzi D."/>
            <person name="Ngui K."/>
            <person name="Masuy D."/>
            <person name="Hancy F."/>
            <person name="Burteau S."/>
            <person name="Boutry M."/>
            <person name="Delcour J."/>
            <person name="Goffeau A."/>
            <person name="Hols P."/>
        </authorList>
    </citation>
    <scope>NUCLEOTIDE SEQUENCE [LARGE SCALE GENOMIC DNA]</scope>
    <source>
        <strain>ATCC BAA-250 / LMG 18311</strain>
    </source>
</reference>
<accession>Q5M2B6</accession>
<comment type="function">
    <text evidence="1">One of the primary rRNA binding proteins. Required for association of the 30S and 50S subunits to form the 70S ribosome, for tRNA binding and peptide bond formation. It has been suggested to have peptidyltransferase activity; this is somewhat controversial. Makes several contacts with the 16S rRNA in the 70S ribosome.</text>
</comment>
<comment type="subunit">
    <text evidence="1">Part of the 50S ribosomal subunit. Forms a bridge to the 30S subunit in the 70S ribosome.</text>
</comment>
<comment type="similarity">
    <text evidence="1">Belongs to the universal ribosomal protein uL2 family.</text>
</comment>
<proteinExistence type="inferred from homology"/>
<keyword id="KW-1185">Reference proteome</keyword>
<keyword id="KW-0687">Ribonucleoprotein</keyword>
<keyword id="KW-0689">Ribosomal protein</keyword>
<keyword id="KW-0694">RNA-binding</keyword>
<keyword id="KW-0699">rRNA-binding</keyword>
<dbReference type="EMBL" id="CP000023">
    <property type="protein sequence ID" value="AAV61529.1"/>
    <property type="molecule type" value="Genomic_DNA"/>
</dbReference>
<dbReference type="RefSeq" id="WP_002952161.1">
    <property type="nucleotide sequence ID" value="NC_006448.1"/>
</dbReference>
<dbReference type="SMR" id="Q5M2B6"/>
<dbReference type="STRING" id="264199.stu1931"/>
<dbReference type="GeneID" id="66899659"/>
<dbReference type="KEGG" id="stl:stu1931"/>
<dbReference type="eggNOG" id="COG0090">
    <property type="taxonomic scope" value="Bacteria"/>
</dbReference>
<dbReference type="HOGENOM" id="CLU_036235_2_1_9"/>
<dbReference type="Proteomes" id="UP000001170">
    <property type="component" value="Chromosome"/>
</dbReference>
<dbReference type="GO" id="GO:0015934">
    <property type="term" value="C:large ribosomal subunit"/>
    <property type="evidence" value="ECO:0007669"/>
    <property type="project" value="InterPro"/>
</dbReference>
<dbReference type="GO" id="GO:0019843">
    <property type="term" value="F:rRNA binding"/>
    <property type="evidence" value="ECO:0007669"/>
    <property type="project" value="UniProtKB-UniRule"/>
</dbReference>
<dbReference type="GO" id="GO:0003735">
    <property type="term" value="F:structural constituent of ribosome"/>
    <property type="evidence" value="ECO:0007669"/>
    <property type="project" value="InterPro"/>
</dbReference>
<dbReference type="GO" id="GO:0016740">
    <property type="term" value="F:transferase activity"/>
    <property type="evidence" value="ECO:0007669"/>
    <property type="project" value="InterPro"/>
</dbReference>
<dbReference type="GO" id="GO:0002181">
    <property type="term" value="P:cytoplasmic translation"/>
    <property type="evidence" value="ECO:0007669"/>
    <property type="project" value="TreeGrafter"/>
</dbReference>
<dbReference type="FunFam" id="2.30.30.30:FF:000001">
    <property type="entry name" value="50S ribosomal protein L2"/>
    <property type="match status" value="1"/>
</dbReference>
<dbReference type="FunFam" id="2.40.50.140:FF:000003">
    <property type="entry name" value="50S ribosomal protein L2"/>
    <property type="match status" value="1"/>
</dbReference>
<dbReference type="FunFam" id="4.10.950.10:FF:000001">
    <property type="entry name" value="50S ribosomal protein L2"/>
    <property type="match status" value="1"/>
</dbReference>
<dbReference type="Gene3D" id="2.30.30.30">
    <property type="match status" value="1"/>
</dbReference>
<dbReference type="Gene3D" id="2.40.50.140">
    <property type="entry name" value="Nucleic acid-binding proteins"/>
    <property type="match status" value="1"/>
</dbReference>
<dbReference type="Gene3D" id="4.10.950.10">
    <property type="entry name" value="Ribosomal protein L2, domain 3"/>
    <property type="match status" value="1"/>
</dbReference>
<dbReference type="HAMAP" id="MF_01320_B">
    <property type="entry name" value="Ribosomal_uL2_B"/>
    <property type="match status" value="1"/>
</dbReference>
<dbReference type="InterPro" id="IPR012340">
    <property type="entry name" value="NA-bd_OB-fold"/>
</dbReference>
<dbReference type="InterPro" id="IPR014722">
    <property type="entry name" value="Rib_uL2_dom2"/>
</dbReference>
<dbReference type="InterPro" id="IPR002171">
    <property type="entry name" value="Ribosomal_uL2"/>
</dbReference>
<dbReference type="InterPro" id="IPR005880">
    <property type="entry name" value="Ribosomal_uL2_bac/org-type"/>
</dbReference>
<dbReference type="InterPro" id="IPR022669">
    <property type="entry name" value="Ribosomal_uL2_C"/>
</dbReference>
<dbReference type="InterPro" id="IPR022671">
    <property type="entry name" value="Ribosomal_uL2_CS"/>
</dbReference>
<dbReference type="InterPro" id="IPR014726">
    <property type="entry name" value="Ribosomal_uL2_dom3"/>
</dbReference>
<dbReference type="InterPro" id="IPR022666">
    <property type="entry name" value="Ribosomal_uL2_RNA-bd_dom"/>
</dbReference>
<dbReference type="InterPro" id="IPR008991">
    <property type="entry name" value="Translation_prot_SH3-like_sf"/>
</dbReference>
<dbReference type="NCBIfam" id="TIGR01171">
    <property type="entry name" value="rplB_bact"/>
    <property type="match status" value="1"/>
</dbReference>
<dbReference type="PANTHER" id="PTHR13691:SF5">
    <property type="entry name" value="LARGE RIBOSOMAL SUBUNIT PROTEIN UL2M"/>
    <property type="match status" value="1"/>
</dbReference>
<dbReference type="PANTHER" id="PTHR13691">
    <property type="entry name" value="RIBOSOMAL PROTEIN L2"/>
    <property type="match status" value="1"/>
</dbReference>
<dbReference type="Pfam" id="PF00181">
    <property type="entry name" value="Ribosomal_L2"/>
    <property type="match status" value="1"/>
</dbReference>
<dbReference type="Pfam" id="PF03947">
    <property type="entry name" value="Ribosomal_L2_C"/>
    <property type="match status" value="1"/>
</dbReference>
<dbReference type="PIRSF" id="PIRSF002158">
    <property type="entry name" value="Ribosomal_L2"/>
    <property type="match status" value="1"/>
</dbReference>
<dbReference type="SMART" id="SM01383">
    <property type="entry name" value="Ribosomal_L2"/>
    <property type="match status" value="1"/>
</dbReference>
<dbReference type="SMART" id="SM01382">
    <property type="entry name" value="Ribosomal_L2_C"/>
    <property type="match status" value="1"/>
</dbReference>
<dbReference type="SUPFAM" id="SSF50249">
    <property type="entry name" value="Nucleic acid-binding proteins"/>
    <property type="match status" value="1"/>
</dbReference>
<dbReference type="SUPFAM" id="SSF50104">
    <property type="entry name" value="Translation proteins SH3-like domain"/>
    <property type="match status" value="1"/>
</dbReference>
<dbReference type="PROSITE" id="PS00467">
    <property type="entry name" value="RIBOSOMAL_L2"/>
    <property type="match status" value="1"/>
</dbReference>
<protein>
    <recommendedName>
        <fullName evidence="1">Large ribosomal subunit protein uL2</fullName>
    </recommendedName>
    <alternativeName>
        <fullName evidence="3">50S ribosomal protein L2</fullName>
    </alternativeName>
</protein>
<organism>
    <name type="scientific">Streptococcus thermophilus (strain ATCC BAA-250 / LMG 18311)</name>
    <dbReference type="NCBI Taxonomy" id="264199"/>
    <lineage>
        <taxon>Bacteria</taxon>
        <taxon>Bacillati</taxon>
        <taxon>Bacillota</taxon>
        <taxon>Bacilli</taxon>
        <taxon>Lactobacillales</taxon>
        <taxon>Streptococcaceae</taxon>
        <taxon>Streptococcus</taxon>
    </lineage>
</organism>